<feature type="chain" id="PRO_1000193719" description="Glutamate 5-kinase">
    <location>
        <begin position="1"/>
        <end position="367"/>
    </location>
</feature>
<feature type="domain" description="PUA" evidence="1">
    <location>
        <begin position="275"/>
        <end position="353"/>
    </location>
</feature>
<feature type="binding site" evidence="1">
    <location>
        <position position="10"/>
    </location>
    <ligand>
        <name>ATP</name>
        <dbReference type="ChEBI" id="CHEBI:30616"/>
    </ligand>
</feature>
<feature type="binding site" evidence="1">
    <location>
        <position position="50"/>
    </location>
    <ligand>
        <name>substrate</name>
    </ligand>
</feature>
<feature type="binding site" evidence="1">
    <location>
        <position position="137"/>
    </location>
    <ligand>
        <name>substrate</name>
    </ligand>
</feature>
<feature type="binding site" evidence="1">
    <location>
        <position position="149"/>
    </location>
    <ligand>
        <name>substrate</name>
    </ligand>
</feature>
<feature type="binding site" evidence="1">
    <location>
        <begin position="169"/>
        <end position="170"/>
    </location>
    <ligand>
        <name>ATP</name>
        <dbReference type="ChEBI" id="CHEBI:30616"/>
    </ligand>
</feature>
<feature type="binding site" evidence="1">
    <location>
        <begin position="211"/>
        <end position="217"/>
    </location>
    <ligand>
        <name>ATP</name>
        <dbReference type="ChEBI" id="CHEBI:30616"/>
    </ligand>
</feature>
<evidence type="ECO:0000255" key="1">
    <source>
        <dbReference type="HAMAP-Rule" id="MF_00456"/>
    </source>
</evidence>
<proteinExistence type="inferred from homology"/>
<keyword id="KW-0028">Amino-acid biosynthesis</keyword>
<keyword id="KW-0067">ATP-binding</keyword>
<keyword id="KW-0963">Cytoplasm</keyword>
<keyword id="KW-0418">Kinase</keyword>
<keyword id="KW-0547">Nucleotide-binding</keyword>
<keyword id="KW-0641">Proline biosynthesis</keyword>
<keyword id="KW-0808">Transferase</keyword>
<accession>B2K6Q3</accession>
<comment type="function">
    <text evidence="1">Catalyzes the transfer of a phosphate group to glutamate to form L-glutamate 5-phosphate.</text>
</comment>
<comment type="catalytic activity">
    <reaction evidence="1">
        <text>L-glutamate + ATP = L-glutamyl 5-phosphate + ADP</text>
        <dbReference type="Rhea" id="RHEA:14877"/>
        <dbReference type="ChEBI" id="CHEBI:29985"/>
        <dbReference type="ChEBI" id="CHEBI:30616"/>
        <dbReference type="ChEBI" id="CHEBI:58274"/>
        <dbReference type="ChEBI" id="CHEBI:456216"/>
        <dbReference type="EC" id="2.7.2.11"/>
    </reaction>
</comment>
<comment type="pathway">
    <text evidence="1">Amino-acid biosynthesis; L-proline biosynthesis; L-glutamate 5-semialdehyde from L-glutamate: step 1/2.</text>
</comment>
<comment type="subcellular location">
    <subcellularLocation>
        <location evidence="1">Cytoplasm</location>
    </subcellularLocation>
</comment>
<comment type="similarity">
    <text evidence="1">Belongs to the glutamate 5-kinase family.</text>
</comment>
<sequence length="367" mass="39291">MSGSQTLVVKLGTSVLTGGSRRLNRAHIVELVRQCAQQHAKGHRIVIVTSGAIAAGREHLGYPELPATIASKQLLAAVGQSRLIQLWEQLFSIYGIHIGQMLLTRADLEDRERFLNARDTMNALLDNRIVPVINENDAVATAEIKVGDNDNLSALAAILASADKLLLLTDQAGLYTADPRNNPEAELIREVHGIDDVLRGMAGDSVSGLGTGGMATKLQAADVACRAGIDVVIAAGSQVGVIADVIDGTPVGTRFHSLETPLENRKRWIFGAPPAGEITVDDGAVFAIMERGSSLLPKGIRSVKGDFSRGEVIRIRNLNGRDLAHGVSRYNSDALRMLAGHHSQQISEILGYEYGPVAVHRDDMIVS</sequence>
<organism>
    <name type="scientific">Yersinia pseudotuberculosis serotype IB (strain PB1/+)</name>
    <dbReference type="NCBI Taxonomy" id="502801"/>
    <lineage>
        <taxon>Bacteria</taxon>
        <taxon>Pseudomonadati</taxon>
        <taxon>Pseudomonadota</taxon>
        <taxon>Gammaproteobacteria</taxon>
        <taxon>Enterobacterales</taxon>
        <taxon>Yersiniaceae</taxon>
        <taxon>Yersinia</taxon>
    </lineage>
</organism>
<gene>
    <name evidence="1" type="primary">proB</name>
    <name type="ordered locus">YPTS_0946</name>
</gene>
<name>PROB_YERPB</name>
<reference key="1">
    <citation type="submission" date="2008-04" db="EMBL/GenBank/DDBJ databases">
        <title>Complete sequence of Yersinia pseudotuberculosis PB1/+.</title>
        <authorList>
            <person name="Copeland A."/>
            <person name="Lucas S."/>
            <person name="Lapidus A."/>
            <person name="Glavina del Rio T."/>
            <person name="Dalin E."/>
            <person name="Tice H."/>
            <person name="Bruce D."/>
            <person name="Goodwin L."/>
            <person name="Pitluck S."/>
            <person name="Munk A.C."/>
            <person name="Brettin T."/>
            <person name="Detter J.C."/>
            <person name="Han C."/>
            <person name="Tapia R."/>
            <person name="Schmutz J."/>
            <person name="Larimer F."/>
            <person name="Land M."/>
            <person name="Hauser L."/>
            <person name="Challacombe J.F."/>
            <person name="Green L."/>
            <person name="Lindler L.E."/>
            <person name="Nikolich M.P."/>
            <person name="Richardson P."/>
        </authorList>
    </citation>
    <scope>NUCLEOTIDE SEQUENCE [LARGE SCALE GENOMIC DNA]</scope>
    <source>
        <strain>PB1/+</strain>
    </source>
</reference>
<dbReference type="EC" id="2.7.2.11" evidence="1"/>
<dbReference type="EMBL" id="CP001048">
    <property type="protein sequence ID" value="ACC87927.1"/>
    <property type="molecule type" value="Genomic_DNA"/>
</dbReference>
<dbReference type="RefSeq" id="WP_002208701.1">
    <property type="nucleotide sequence ID" value="NZ_CP009780.1"/>
</dbReference>
<dbReference type="SMR" id="B2K6Q3"/>
<dbReference type="GeneID" id="57975496"/>
<dbReference type="KEGG" id="ypb:YPTS_0946"/>
<dbReference type="PATRIC" id="fig|502801.10.peg.283"/>
<dbReference type="UniPathway" id="UPA00098">
    <property type="reaction ID" value="UER00359"/>
</dbReference>
<dbReference type="GO" id="GO:0005829">
    <property type="term" value="C:cytosol"/>
    <property type="evidence" value="ECO:0007669"/>
    <property type="project" value="TreeGrafter"/>
</dbReference>
<dbReference type="GO" id="GO:0005524">
    <property type="term" value="F:ATP binding"/>
    <property type="evidence" value="ECO:0007669"/>
    <property type="project" value="UniProtKB-KW"/>
</dbReference>
<dbReference type="GO" id="GO:0004349">
    <property type="term" value="F:glutamate 5-kinase activity"/>
    <property type="evidence" value="ECO:0007669"/>
    <property type="project" value="UniProtKB-UniRule"/>
</dbReference>
<dbReference type="GO" id="GO:0003723">
    <property type="term" value="F:RNA binding"/>
    <property type="evidence" value="ECO:0007669"/>
    <property type="project" value="InterPro"/>
</dbReference>
<dbReference type="GO" id="GO:0055129">
    <property type="term" value="P:L-proline biosynthetic process"/>
    <property type="evidence" value="ECO:0007669"/>
    <property type="project" value="UniProtKB-UniRule"/>
</dbReference>
<dbReference type="CDD" id="cd04242">
    <property type="entry name" value="AAK_G5K_ProB"/>
    <property type="match status" value="1"/>
</dbReference>
<dbReference type="CDD" id="cd21157">
    <property type="entry name" value="PUA_G5K"/>
    <property type="match status" value="1"/>
</dbReference>
<dbReference type="FunFam" id="2.30.130.10:FF:000003">
    <property type="entry name" value="Glutamate 5-kinase"/>
    <property type="match status" value="1"/>
</dbReference>
<dbReference type="FunFam" id="3.40.1160.10:FF:000006">
    <property type="entry name" value="Glutamate 5-kinase"/>
    <property type="match status" value="1"/>
</dbReference>
<dbReference type="Gene3D" id="3.40.1160.10">
    <property type="entry name" value="Acetylglutamate kinase-like"/>
    <property type="match status" value="2"/>
</dbReference>
<dbReference type="Gene3D" id="2.30.130.10">
    <property type="entry name" value="PUA domain"/>
    <property type="match status" value="1"/>
</dbReference>
<dbReference type="HAMAP" id="MF_00456">
    <property type="entry name" value="ProB"/>
    <property type="match status" value="1"/>
</dbReference>
<dbReference type="InterPro" id="IPR036393">
    <property type="entry name" value="AceGlu_kinase-like_sf"/>
</dbReference>
<dbReference type="InterPro" id="IPR001048">
    <property type="entry name" value="Asp/Glu/Uridylate_kinase"/>
</dbReference>
<dbReference type="InterPro" id="IPR041739">
    <property type="entry name" value="G5K_ProB"/>
</dbReference>
<dbReference type="InterPro" id="IPR001057">
    <property type="entry name" value="Glu/AcGlu_kinase"/>
</dbReference>
<dbReference type="InterPro" id="IPR011529">
    <property type="entry name" value="Glu_5kinase"/>
</dbReference>
<dbReference type="InterPro" id="IPR005715">
    <property type="entry name" value="Glu_5kinase/COase_Synthase"/>
</dbReference>
<dbReference type="InterPro" id="IPR019797">
    <property type="entry name" value="Glutamate_5-kinase_CS"/>
</dbReference>
<dbReference type="InterPro" id="IPR002478">
    <property type="entry name" value="PUA"/>
</dbReference>
<dbReference type="InterPro" id="IPR015947">
    <property type="entry name" value="PUA-like_sf"/>
</dbReference>
<dbReference type="InterPro" id="IPR036974">
    <property type="entry name" value="PUA_sf"/>
</dbReference>
<dbReference type="NCBIfam" id="TIGR01027">
    <property type="entry name" value="proB"/>
    <property type="match status" value="1"/>
</dbReference>
<dbReference type="PANTHER" id="PTHR43654">
    <property type="entry name" value="GLUTAMATE 5-KINASE"/>
    <property type="match status" value="1"/>
</dbReference>
<dbReference type="PANTHER" id="PTHR43654:SF1">
    <property type="entry name" value="ISOPENTENYL PHOSPHATE KINASE"/>
    <property type="match status" value="1"/>
</dbReference>
<dbReference type="Pfam" id="PF00696">
    <property type="entry name" value="AA_kinase"/>
    <property type="match status" value="1"/>
</dbReference>
<dbReference type="Pfam" id="PF01472">
    <property type="entry name" value="PUA"/>
    <property type="match status" value="1"/>
</dbReference>
<dbReference type="PIRSF" id="PIRSF000729">
    <property type="entry name" value="GK"/>
    <property type="match status" value="1"/>
</dbReference>
<dbReference type="PRINTS" id="PR00474">
    <property type="entry name" value="GLU5KINASE"/>
</dbReference>
<dbReference type="SMART" id="SM00359">
    <property type="entry name" value="PUA"/>
    <property type="match status" value="1"/>
</dbReference>
<dbReference type="SUPFAM" id="SSF53633">
    <property type="entry name" value="Carbamate kinase-like"/>
    <property type="match status" value="1"/>
</dbReference>
<dbReference type="SUPFAM" id="SSF88697">
    <property type="entry name" value="PUA domain-like"/>
    <property type="match status" value="1"/>
</dbReference>
<dbReference type="PROSITE" id="PS00902">
    <property type="entry name" value="GLUTAMATE_5_KINASE"/>
    <property type="match status" value="1"/>
</dbReference>
<dbReference type="PROSITE" id="PS50890">
    <property type="entry name" value="PUA"/>
    <property type="match status" value="1"/>
</dbReference>
<protein>
    <recommendedName>
        <fullName evidence="1">Glutamate 5-kinase</fullName>
        <ecNumber evidence="1">2.7.2.11</ecNumber>
    </recommendedName>
    <alternativeName>
        <fullName evidence="1">Gamma-glutamyl kinase</fullName>
        <shortName evidence="1">GK</shortName>
    </alternativeName>
</protein>